<dbReference type="EC" id="2.3.1.297" evidence="10"/>
<dbReference type="EMBL" id="AF105010">
    <property type="protein sequence ID" value="AAD16893.1"/>
    <property type="molecule type" value="mRNA"/>
</dbReference>
<dbReference type="EMBL" id="FO080478">
    <property type="protein sequence ID" value="CCD63994.1"/>
    <property type="molecule type" value="Genomic_DNA"/>
</dbReference>
<dbReference type="RefSeq" id="NP_501459.1">
    <property type="nucleotide sequence ID" value="NM_069058.9"/>
</dbReference>
<dbReference type="SMR" id="G5ED45"/>
<dbReference type="FunCoup" id="G5ED45">
    <property type="interactions" value="3014"/>
</dbReference>
<dbReference type="STRING" id="6239.C09G4.1b.1"/>
<dbReference type="SwissLipids" id="SLP:000000002"/>
<dbReference type="SwissLipids" id="SLP:000000177"/>
<dbReference type="SwissLipids" id="SLP:000000180"/>
<dbReference type="SwissLipids" id="SLP:000000182"/>
<dbReference type="PaxDb" id="6239-C09G4.1.2"/>
<dbReference type="PeptideAtlas" id="G5ED45"/>
<dbReference type="EnsemblMetazoa" id="C09G4.1a.1">
    <property type="protein sequence ID" value="C09G4.1a.1"/>
    <property type="gene ID" value="WBGene00002043"/>
</dbReference>
<dbReference type="GeneID" id="177660"/>
<dbReference type="KEGG" id="cel:CELE_C09G4.1"/>
<dbReference type="AGR" id="WB:WBGene00002043"/>
<dbReference type="CTD" id="177660"/>
<dbReference type="WormBase" id="C09G4.1a">
    <property type="protein sequence ID" value="CE27675"/>
    <property type="gene ID" value="WBGene00002043"/>
    <property type="gene designation" value="hyl-1"/>
</dbReference>
<dbReference type="eggNOG" id="KOG1607">
    <property type="taxonomic scope" value="Eukaryota"/>
</dbReference>
<dbReference type="HOGENOM" id="CLU_028277_1_0_1"/>
<dbReference type="InParanoid" id="G5ED45"/>
<dbReference type="OrthoDB" id="537032at2759"/>
<dbReference type="PhylomeDB" id="G5ED45"/>
<dbReference type="Reactome" id="R-CEL-1660661">
    <property type="pathway name" value="Sphingolipid de novo biosynthesis"/>
</dbReference>
<dbReference type="UniPathway" id="UPA00222"/>
<dbReference type="PRO" id="PR:G5ED45"/>
<dbReference type="Proteomes" id="UP000001940">
    <property type="component" value="Chromosome IV"/>
</dbReference>
<dbReference type="Bgee" id="WBGene00002043">
    <property type="expression patterns" value="Expressed in pharyngeal muscle cell (C elegans) and 4 other cell types or tissues"/>
</dbReference>
<dbReference type="ExpressionAtlas" id="G5ED45">
    <property type="expression patterns" value="baseline and differential"/>
</dbReference>
<dbReference type="GO" id="GO:0030424">
    <property type="term" value="C:axon"/>
    <property type="evidence" value="ECO:0000314"/>
    <property type="project" value="WormBase"/>
</dbReference>
<dbReference type="GO" id="GO:0005789">
    <property type="term" value="C:endoplasmic reticulum membrane"/>
    <property type="evidence" value="ECO:0000250"/>
    <property type="project" value="WormBase"/>
</dbReference>
<dbReference type="GO" id="GO:0050291">
    <property type="term" value="F:sphingosine N-acyltransferase activity"/>
    <property type="evidence" value="ECO:0000318"/>
    <property type="project" value="GO_Central"/>
</dbReference>
<dbReference type="GO" id="GO:0046513">
    <property type="term" value="P:ceramide biosynthetic process"/>
    <property type="evidence" value="ECO:0000250"/>
    <property type="project" value="WormBase"/>
</dbReference>
<dbReference type="GO" id="GO:0040012">
    <property type="term" value="P:regulation of locomotion"/>
    <property type="evidence" value="ECO:0000315"/>
    <property type="project" value="WormBase"/>
</dbReference>
<dbReference type="InterPro" id="IPR016439">
    <property type="entry name" value="Lag1/Lac1-like"/>
</dbReference>
<dbReference type="InterPro" id="IPR006634">
    <property type="entry name" value="TLC-dom"/>
</dbReference>
<dbReference type="PANTHER" id="PTHR12560:SF0">
    <property type="entry name" value="LD18904P"/>
    <property type="match status" value="1"/>
</dbReference>
<dbReference type="PANTHER" id="PTHR12560">
    <property type="entry name" value="LONGEVITY ASSURANCE FACTOR 1 LAG1"/>
    <property type="match status" value="1"/>
</dbReference>
<dbReference type="Pfam" id="PF03798">
    <property type="entry name" value="TRAM_LAG1_CLN8"/>
    <property type="match status" value="1"/>
</dbReference>
<dbReference type="PIRSF" id="PIRSF005225">
    <property type="entry name" value="LAG1_LAC1"/>
    <property type="match status" value="1"/>
</dbReference>
<dbReference type="SMART" id="SM00724">
    <property type="entry name" value="TLC"/>
    <property type="match status" value="1"/>
</dbReference>
<dbReference type="PROSITE" id="PS50922">
    <property type="entry name" value="TLC"/>
    <property type="match status" value="1"/>
</dbReference>
<keyword id="KW-0444">Lipid biosynthesis</keyword>
<keyword id="KW-0443">Lipid metabolism</keyword>
<keyword id="KW-0472">Membrane</keyword>
<keyword id="KW-1185">Reference proteome</keyword>
<keyword id="KW-0746">Sphingolipid metabolism</keyword>
<keyword id="KW-0808">Transferase</keyword>
<keyword id="KW-0812">Transmembrane</keyword>
<keyword id="KW-1133">Transmembrane helix</keyword>
<gene>
    <name type="primary">hyl-1</name>
    <name type="ORF">C09G4.1</name>
</gene>
<comment type="function">
    <text evidence="4 5 6 7">Catalyzes the acylation of sphingoid bases to form ceramides, which are key players in cell signaling events such as extending lifespan and enhancing stress resistance (PubMed:18832646, PubMed:38677510). C.elegans contain specific sphingoid bases, which are unique or different in structure compared to the sphingoid bases found in other animals. Two examples of these distinctive compounds are: 15-methylhexadecasphinganine and 15-methylhexadecasphing-4-enine (PubMed:30155209). Exhibits substrate preference for fatty acyl-coA chains containing carbon chain length (C16-C18) and very long chains (24 carbons and more) (PubMed:19372430, PubMed:38677510).</text>
</comment>
<comment type="catalytic activity">
    <reaction evidence="5 7">
        <text>a very long-chain fatty acyl-CoA + a sphingoid base = an N-(very-long-chain fatty acyl)-sphingoid base + CoA + H(+)</text>
        <dbReference type="Rhea" id="RHEA:61480"/>
        <dbReference type="ChEBI" id="CHEBI:15378"/>
        <dbReference type="ChEBI" id="CHEBI:57287"/>
        <dbReference type="ChEBI" id="CHEBI:84410"/>
        <dbReference type="ChEBI" id="CHEBI:138261"/>
        <dbReference type="ChEBI" id="CHEBI:144712"/>
        <dbReference type="EC" id="2.3.1.297"/>
    </reaction>
    <physiologicalReaction direction="left-to-right" evidence="10 11">
        <dbReference type="Rhea" id="RHEA:61481"/>
    </physiologicalReaction>
</comment>
<comment type="catalytic activity">
    <reaction evidence="5 11">
        <text>15-methylhexadecasphinganine + a fatty acyl-CoA = an N-acyl-15-methylhexadecasphinganine + CoA + H(+)</text>
        <dbReference type="Rhea" id="RHEA:34603"/>
        <dbReference type="ChEBI" id="CHEBI:15378"/>
        <dbReference type="ChEBI" id="CHEBI:57287"/>
        <dbReference type="ChEBI" id="CHEBI:70829"/>
        <dbReference type="ChEBI" id="CHEBI:70845"/>
        <dbReference type="ChEBI" id="CHEBI:77636"/>
    </reaction>
    <physiologicalReaction direction="left-to-right" evidence="5 11">
        <dbReference type="Rhea" id="RHEA:34604"/>
    </physiologicalReaction>
</comment>
<comment type="catalytic activity">
    <reaction evidence="5">
        <text>a fatty acyl-CoA + sphinganine = an N-acylsphinganine + CoA + H(+)</text>
        <dbReference type="Rhea" id="RHEA:34735"/>
        <dbReference type="ChEBI" id="CHEBI:15378"/>
        <dbReference type="ChEBI" id="CHEBI:31488"/>
        <dbReference type="ChEBI" id="CHEBI:57287"/>
        <dbReference type="ChEBI" id="CHEBI:57817"/>
        <dbReference type="ChEBI" id="CHEBI:77636"/>
    </reaction>
    <physiologicalReaction direction="left-to-right" evidence="5">
        <dbReference type="Rhea" id="RHEA:34736"/>
    </physiologicalReaction>
</comment>
<comment type="catalytic activity">
    <reaction evidence="5">
        <text>sphinganine + tetradecanoyl-CoA = N-(tetradecanoyl)-sphinganine + CoA + H(+)</text>
        <dbReference type="Rhea" id="RHEA:36571"/>
        <dbReference type="ChEBI" id="CHEBI:15378"/>
        <dbReference type="ChEBI" id="CHEBI:57287"/>
        <dbReference type="ChEBI" id="CHEBI:57385"/>
        <dbReference type="ChEBI" id="CHEBI:57817"/>
        <dbReference type="ChEBI" id="CHEBI:67045"/>
    </reaction>
    <physiologicalReaction direction="left-to-right" evidence="5">
        <dbReference type="Rhea" id="RHEA:36572"/>
    </physiologicalReaction>
</comment>
<comment type="catalytic activity">
    <reaction evidence="5">
        <text>hexacosanoyl-CoA + sphinganine = N-hexacosanoylsphinganine + CoA + H(+)</text>
        <dbReference type="Rhea" id="RHEA:33351"/>
        <dbReference type="ChEBI" id="CHEBI:15378"/>
        <dbReference type="ChEBI" id="CHEBI:52962"/>
        <dbReference type="ChEBI" id="CHEBI:57287"/>
        <dbReference type="ChEBI" id="CHEBI:57817"/>
        <dbReference type="ChEBI" id="CHEBI:64868"/>
    </reaction>
    <physiologicalReaction direction="left-to-right" evidence="5">
        <dbReference type="Rhea" id="RHEA:33352"/>
    </physiologicalReaction>
</comment>
<comment type="pathway">
    <text evidence="5 11">Lipid metabolism; sphingolipid metabolism.</text>
</comment>
<comment type="subcellular location">
    <subcellularLocation>
        <location evidence="9">Membrane</location>
        <topology evidence="9">Multi-pass membrane protein</topology>
    </subcellularLocation>
</comment>
<comment type="similarity">
    <text evidence="9">Belongs to the sphingosine N-acyltransferase family.</text>
</comment>
<proteinExistence type="evidence at protein level"/>
<name>HYL1_CAEEL</name>
<accession>G5ED45</accession>
<feature type="chain" id="PRO_0000421291" description="Ceramide synthase hyl-1">
    <location>
        <begin position="1"/>
        <end position="368"/>
    </location>
</feature>
<feature type="transmembrane region" description="Helical" evidence="1">
    <location>
        <begin position="27"/>
        <end position="47"/>
    </location>
</feature>
<feature type="transmembrane region" description="Helical" evidence="1">
    <location>
        <begin position="92"/>
        <end position="112"/>
    </location>
</feature>
<feature type="transmembrane region" description="Helical" evidence="1">
    <location>
        <begin position="138"/>
        <end position="158"/>
    </location>
</feature>
<feature type="transmembrane region" description="Helical" evidence="1">
    <location>
        <begin position="165"/>
        <end position="185"/>
    </location>
</feature>
<feature type="transmembrane region" description="Helical" evidence="1">
    <location>
        <begin position="191"/>
        <end position="211"/>
    </location>
</feature>
<feature type="transmembrane region" description="Helical" evidence="1">
    <location>
        <begin position="225"/>
        <end position="245"/>
    </location>
</feature>
<feature type="transmembrane region" description="Helical" evidence="1">
    <location>
        <begin position="275"/>
        <end position="295"/>
    </location>
</feature>
<feature type="domain" description="TLC" evidence="2">
    <location>
        <begin position="90"/>
        <end position="303"/>
    </location>
</feature>
<feature type="region of interest" description="Disordered" evidence="3">
    <location>
        <begin position="306"/>
        <end position="368"/>
    </location>
</feature>
<feature type="compositionally biased region" description="Acidic residues" evidence="3">
    <location>
        <begin position="343"/>
        <end position="353"/>
    </location>
</feature>
<feature type="compositionally biased region" description="Basic residues" evidence="3">
    <location>
        <begin position="357"/>
        <end position="368"/>
    </location>
</feature>
<sequence>MWRMSYFWHEPYWLPRNVTWPEVPAKFVDLLVPIYLAIPLVIIRILWESTIGVTYLYFRTNAYASRKNITLLGCMWEHMTGGFASVSRAKKILECFWRFSYYTFAFLYGLYVMKNSSWLYDVKQCWIGYPFHPVPDTIWWYYMIETGFYYSLLIGSTFDVRRSDFWQLMVHHVITIFLLSSSWTINFVRVGTLILLSHDVSDVFLEGGKLVRYDAHNKNMTNFMFVLFFSSWVATRLIYYPFIVIRSAVTEAAALIQPDYILWDYQLSPPYAPRLIVFALILLFFLHIFWTFIILRIAYRTSTGGQAKDVRSDSDSDYDEEEMARRERTRLLKKKKNKVSPSTDDDDDEGEEEKNDRKARHRRAPRKE</sequence>
<reference key="1">
    <citation type="journal article" date="1998" name="Genome Res.">
        <title>Homologs of the yeast longevity gene LAG1 in Caenorhabditis elegans and human.</title>
        <authorList>
            <person name="Jiang J.C."/>
            <person name="Kirchman P.A."/>
            <person name="Zagulski M."/>
            <person name="Hunt J."/>
            <person name="Jazwinski S.M."/>
        </authorList>
    </citation>
    <scope>NUCLEOTIDE SEQUENCE [MRNA]</scope>
</reference>
<reference key="2">
    <citation type="journal article" date="1998" name="Science">
        <title>Genome sequence of the nematode C. elegans: a platform for investigating biology.</title>
        <authorList>
            <consortium name="The C. elegans sequencing consortium"/>
        </authorList>
    </citation>
    <scope>NUCLEOTIDE SEQUENCE [LARGE SCALE GENOMIC DNA]</scope>
    <source>
        <strain>Bristol N2</strain>
    </source>
</reference>
<reference key="3">
    <citation type="journal article" date="2008" name="Science">
        <title>Ceramide biogenesis is required for radiation-induced apoptosis in the germ line of C. elegans.</title>
        <authorList>
            <person name="Deng X."/>
            <person name="Yin X."/>
            <person name="Allan R."/>
            <person name="Lu D.D."/>
            <person name="Maurer C.W."/>
            <person name="Haimovitz-Friedman A."/>
            <person name="Fuks Z."/>
            <person name="Shaham S."/>
            <person name="Kolesnick R."/>
        </authorList>
    </citation>
    <scope>FUNCTION</scope>
</reference>
<reference key="4">
    <citation type="journal article" date="2009" name="Science">
        <title>Protection of C. elegans from anoxia by HYL-2 ceramide synthase.</title>
        <authorList>
            <person name="Menuz V."/>
            <person name="Howell K.S."/>
            <person name="Gentina S."/>
            <person name="Epstein S."/>
            <person name="Riezman I."/>
            <person name="Fornallaz-Mulhauser M."/>
            <person name="Hengartner M.O."/>
            <person name="Gomez M."/>
            <person name="Riezman H."/>
            <person name="Martinou J.C."/>
        </authorList>
    </citation>
    <scope>FUNCTION</scope>
    <scope>CATALYTIC ACTIVITY</scope>
    <scope>PATHWAY</scope>
</reference>
<reference key="5">
    <citation type="journal article" date="2017" name="Chem. Sci.">
        <title>Structure and conserved function of iso-branched sphingoid bases from the nematode Caenorhabditis elegans.</title>
        <authorList>
            <person name="Hannich J.T."/>
            <person name="Mellal D."/>
            <person name="Feng S."/>
            <person name="Zumbuehl A."/>
            <person name="Riezman H."/>
        </authorList>
    </citation>
    <scope>FUNCTION</scope>
</reference>
<reference key="6">
    <citation type="journal article" date="2024" name="J. Biol. Chem.">
        <title>Loss of the ceramide synthase HYL-2 from Caenorhabditis elegans impairs stress responses and alters sphingolipid composition.</title>
        <authorList>
            <person name="Zhu H."/>
            <person name="You Y."/>
            <person name="Yu B."/>
            <person name="Deng Z."/>
            <person name="Liu M."/>
            <person name="Hu Z."/>
            <person name="Duan J."/>
        </authorList>
    </citation>
    <scope>FUNCTION</scope>
    <scope>CATALYTIC ACTIVITY</scope>
</reference>
<organism>
    <name type="scientific">Caenorhabditis elegans</name>
    <dbReference type="NCBI Taxonomy" id="6239"/>
    <lineage>
        <taxon>Eukaryota</taxon>
        <taxon>Metazoa</taxon>
        <taxon>Ecdysozoa</taxon>
        <taxon>Nematoda</taxon>
        <taxon>Chromadorea</taxon>
        <taxon>Rhabditida</taxon>
        <taxon>Rhabditina</taxon>
        <taxon>Rhabditomorpha</taxon>
        <taxon>Rhabditoidea</taxon>
        <taxon>Rhabditidae</taxon>
        <taxon>Peloderinae</taxon>
        <taxon>Caenorhabditis</taxon>
    </lineage>
</organism>
<evidence type="ECO:0000255" key="1"/>
<evidence type="ECO:0000255" key="2">
    <source>
        <dbReference type="PROSITE-ProRule" id="PRU00205"/>
    </source>
</evidence>
<evidence type="ECO:0000256" key="3">
    <source>
        <dbReference type="SAM" id="MobiDB-lite"/>
    </source>
</evidence>
<evidence type="ECO:0000269" key="4">
    <source>
    </source>
</evidence>
<evidence type="ECO:0000269" key="5">
    <source>
    </source>
</evidence>
<evidence type="ECO:0000269" key="6">
    <source>
    </source>
</evidence>
<evidence type="ECO:0000269" key="7">
    <source>
    </source>
</evidence>
<evidence type="ECO:0000303" key="8">
    <source>
    </source>
</evidence>
<evidence type="ECO:0000305" key="9"/>
<evidence type="ECO:0000305" key="10">
    <source>
    </source>
</evidence>
<evidence type="ECO:0000305" key="11">
    <source>
    </source>
</evidence>
<protein>
    <recommendedName>
        <fullName evidence="8">Ceramide synthase hyl-1</fullName>
        <shortName evidence="8">HYL-1</shortName>
        <ecNumber evidence="10">2.3.1.297</ecNumber>
    </recommendedName>
</protein>